<keyword id="KW-0067">ATP-binding</keyword>
<keyword id="KW-0963">Cytoplasm</keyword>
<keyword id="KW-0460">Magnesium</keyword>
<keyword id="KW-0479">Metal-binding</keyword>
<keyword id="KW-0547">Nucleotide-binding</keyword>
<keyword id="KW-0554">One-carbon metabolism</keyword>
<keyword id="KW-0630">Potassium</keyword>
<keyword id="KW-0808">Transferase</keyword>
<feature type="chain" id="PRO_0000174589" description="S-adenosylmethionine synthase">
    <location>
        <begin position="1"/>
        <end position="397"/>
    </location>
</feature>
<feature type="region of interest" description="Flexible loop" evidence="1">
    <location>
        <begin position="101"/>
        <end position="111"/>
    </location>
</feature>
<feature type="binding site" description="in other chain" evidence="1">
    <location>
        <position position="17"/>
    </location>
    <ligand>
        <name>ATP</name>
        <dbReference type="ChEBI" id="CHEBI:30616"/>
        <note>ligand shared between two neighboring subunits</note>
    </ligand>
</feature>
<feature type="binding site" evidence="1">
    <location>
        <position position="19"/>
    </location>
    <ligand>
        <name>Mg(2+)</name>
        <dbReference type="ChEBI" id="CHEBI:18420"/>
    </ligand>
</feature>
<feature type="binding site" evidence="1">
    <location>
        <position position="45"/>
    </location>
    <ligand>
        <name>K(+)</name>
        <dbReference type="ChEBI" id="CHEBI:29103"/>
    </ligand>
</feature>
<feature type="binding site" description="in other chain" evidence="1">
    <location>
        <position position="58"/>
    </location>
    <ligand>
        <name>L-methionine</name>
        <dbReference type="ChEBI" id="CHEBI:57844"/>
        <note>ligand shared between two neighboring subunits</note>
    </ligand>
</feature>
<feature type="binding site" description="in other chain" evidence="1">
    <location>
        <position position="101"/>
    </location>
    <ligand>
        <name>L-methionine</name>
        <dbReference type="ChEBI" id="CHEBI:57844"/>
        <note>ligand shared between two neighboring subunits</note>
    </ligand>
</feature>
<feature type="binding site" description="in other chain" evidence="1">
    <location>
        <begin position="176"/>
        <end position="178"/>
    </location>
    <ligand>
        <name>ATP</name>
        <dbReference type="ChEBI" id="CHEBI:30616"/>
        <note>ligand shared between two neighboring subunits</note>
    </ligand>
</feature>
<feature type="binding site" description="in other chain" evidence="1">
    <location>
        <begin position="243"/>
        <end position="244"/>
    </location>
    <ligand>
        <name>ATP</name>
        <dbReference type="ChEBI" id="CHEBI:30616"/>
        <note>ligand shared between two neighboring subunits</note>
    </ligand>
</feature>
<feature type="binding site" evidence="1">
    <location>
        <position position="252"/>
    </location>
    <ligand>
        <name>ATP</name>
        <dbReference type="ChEBI" id="CHEBI:30616"/>
        <note>ligand shared between two neighboring subunits</note>
    </ligand>
</feature>
<feature type="binding site" evidence="1">
    <location>
        <position position="252"/>
    </location>
    <ligand>
        <name>L-methionine</name>
        <dbReference type="ChEBI" id="CHEBI:57844"/>
        <note>ligand shared between two neighboring subunits</note>
    </ligand>
</feature>
<feature type="binding site" description="in other chain" evidence="1">
    <location>
        <begin position="258"/>
        <end position="259"/>
    </location>
    <ligand>
        <name>ATP</name>
        <dbReference type="ChEBI" id="CHEBI:30616"/>
        <note>ligand shared between two neighboring subunits</note>
    </ligand>
</feature>
<feature type="binding site" evidence="1">
    <location>
        <position position="279"/>
    </location>
    <ligand>
        <name>ATP</name>
        <dbReference type="ChEBI" id="CHEBI:30616"/>
        <note>ligand shared between two neighboring subunits</note>
    </ligand>
</feature>
<feature type="binding site" description="in other chain" evidence="1">
    <location>
        <position position="283"/>
    </location>
    <ligand>
        <name>L-methionine</name>
        <dbReference type="ChEBI" id="CHEBI:57844"/>
        <note>ligand shared between two neighboring subunits</note>
    </ligand>
</feature>
<reference key="1">
    <citation type="journal article" date="2004" name="Proc. Natl. Acad. Sci. U.S.A.">
        <title>Complete genomes of two clinical Staphylococcus aureus strains: evidence for the rapid evolution of virulence and drug resistance.</title>
        <authorList>
            <person name="Holden M.T.G."/>
            <person name="Feil E.J."/>
            <person name="Lindsay J.A."/>
            <person name="Peacock S.J."/>
            <person name="Day N.P.J."/>
            <person name="Enright M.C."/>
            <person name="Foster T.J."/>
            <person name="Moore C.E."/>
            <person name="Hurst L."/>
            <person name="Atkin R."/>
            <person name="Barron A."/>
            <person name="Bason N."/>
            <person name="Bentley S.D."/>
            <person name="Chillingworth C."/>
            <person name="Chillingworth T."/>
            <person name="Churcher C."/>
            <person name="Clark L."/>
            <person name="Corton C."/>
            <person name="Cronin A."/>
            <person name="Doggett J."/>
            <person name="Dowd L."/>
            <person name="Feltwell T."/>
            <person name="Hance Z."/>
            <person name="Harris B."/>
            <person name="Hauser H."/>
            <person name="Holroyd S."/>
            <person name="Jagels K."/>
            <person name="James K.D."/>
            <person name="Lennard N."/>
            <person name="Line A."/>
            <person name="Mayes R."/>
            <person name="Moule S."/>
            <person name="Mungall K."/>
            <person name="Ormond D."/>
            <person name="Quail M.A."/>
            <person name="Rabbinowitsch E."/>
            <person name="Rutherford K.M."/>
            <person name="Sanders M."/>
            <person name="Sharp S."/>
            <person name="Simmonds M."/>
            <person name="Stevens K."/>
            <person name="Whitehead S."/>
            <person name="Barrell B.G."/>
            <person name="Spratt B.G."/>
            <person name="Parkhill J."/>
        </authorList>
    </citation>
    <scope>NUCLEOTIDE SEQUENCE [LARGE SCALE GENOMIC DNA]</scope>
    <source>
        <strain>MRSA252</strain>
    </source>
</reference>
<protein>
    <recommendedName>
        <fullName evidence="1">S-adenosylmethionine synthase</fullName>
        <shortName evidence="1">AdoMet synthase</shortName>
        <ecNumber evidence="1">2.5.1.6</ecNumber>
    </recommendedName>
    <alternativeName>
        <fullName evidence="1">MAT</fullName>
    </alternativeName>
    <alternativeName>
        <fullName evidence="1">Methionine adenosyltransferase</fullName>
    </alternativeName>
</protein>
<dbReference type="EC" id="2.5.1.6" evidence="1"/>
<dbReference type="EMBL" id="BX571856">
    <property type="protein sequence ID" value="CAG40861.1"/>
    <property type="molecule type" value="Genomic_DNA"/>
</dbReference>
<dbReference type="RefSeq" id="WP_000933819.1">
    <property type="nucleotide sequence ID" value="NC_002952.2"/>
</dbReference>
<dbReference type="SMR" id="Q6GFR6"/>
<dbReference type="KEGG" id="sar:SAR1870"/>
<dbReference type="HOGENOM" id="CLU_041802_1_1_9"/>
<dbReference type="UniPathway" id="UPA00315">
    <property type="reaction ID" value="UER00080"/>
</dbReference>
<dbReference type="Proteomes" id="UP000000596">
    <property type="component" value="Chromosome"/>
</dbReference>
<dbReference type="GO" id="GO:0005737">
    <property type="term" value="C:cytoplasm"/>
    <property type="evidence" value="ECO:0007669"/>
    <property type="project" value="UniProtKB-SubCell"/>
</dbReference>
<dbReference type="GO" id="GO:0005524">
    <property type="term" value="F:ATP binding"/>
    <property type="evidence" value="ECO:0007669"/>
    <property type="project" value="UniProtKB-UniRule"/>
</dbReference>
<dbReference type="GO" id="GO:0000287">
    <property type="term" value="F:magnesium ion binding"/>
    <property type="evidence" value="ECO:0007669"/>
    <property type="project" value="UniProtKB-UniRule"/>
</dbReference>
<dbReference type="GO" id="GO:0004478">
    <property type="term" value="F:methionine adenosyltransferase activity"/>
    <property type="evidence" value="ECO:0007669"/>
    <property type="project" value="UniProtKB-UniRule"/>
</dbReference>
<dbReference type="GO" id="GO:0006730">
    <property type="term" value="P:one-carbon metabolic process"/>
    <property type="evidence" value="ECO:0007669"/>
    <property type="project" value="UniProtKB-KW"/>
</dbReference>
<dbReference type="GO" id="GO:0006556">
    <property type="term" value="P:S-adenosylmethionine biosynthetic process"/>
    <property type="evidence" value="ECO:0007669"/>
    <property type="project" value="UniProtKB-UniRule"/>
</dbReference>
<dbReference type="CDD" id="cd18079">
    <property type="entry name" value="S-AdoMet_synt"/>
    <property type="match status" value="1"/>
</dbReference>
<dbReference type="FunFam" id="3.30.300.10:FF:000003">
    <property type="entry name" value="S-adenosylmethionine synthase"/>
    <property type="match status" value="1"/>
</dbReference>
<dbReference type="FunFam" id="3.30.300.10:FF:000004">
    <property type="entry name" value="S-adenosylmethionine synthase"/>
    <property type="match status" value="1"/>
</dbReference>
<dbReference type="Gene3D" id="3.30.300.10">
    <property type="match status" value="3"/>
</dbReference>
<dbReference type="HAMAP" id="MF_00086">
    <property type="entry name" value="S_AdoMet_synth1"/>
    <property type="match status" value="1"/>
</dbReference>
<dbReference type="InterPro" id="IPR022631">
    <property type="entry name" value="ADOMET_SYNTHASE_CS"/>
</dbReference>
<dbReference type="InterPro" id="IPR022630">
    <property type="entry name" value="S-AdoMet_synt_C"/>
</dbReference>
<dbReference type="InterPro" id="IPR022629">
    <property type="entry name" value="S-AdoMet_synt_central"/>
</dbReference>
<dbReference type="InterPro" id="IPR022628">
    <property type="entry name" value="S-AdoMet_synt_N"/>
</dbReference>
<dbReference type="InterPro" id="IPR002133">
    <property type="entry name" value="S-AdoMet_synthetase"/>
</dbReference>
<dbReference type="InterPro" id="IPR022636">
    <property type="entry name" value="S-AdoMet_synthetase_sfam"/>
</dbReference>
<dbReference type="NCBIfam" id="TIGR01034">
    <property type="entry name" value="metK"/>
    <property type="match status" value="1"/>
</dbReference>
<dbReference type="PANTHER" id="PTHR11964">
    <property type="entry name" value="S-ADENOSYLMETHIONINE SYNTHETASE"/>
    <property type="match status" value="1"/>
</dbReference>
<dbReference type="Pfam" id="PF02773">
    <property type="entry name" value="S-AdoMet_synt_C"/>
    <property type="match status" value="1"/>
</dbReference>
<dbReference type="Pfam" id="PF02772">
    <property type="entry name" value="S-AdoMet_synt_M"/>
    <property type="match status" value="1"/>
</dbReference>
<dbReference type="Pfam" id="PF00438">
    <property type="entry name" value="S-AdoMet_synt_N"/>
    <property type="match status" value="1"/>
</dbReference>
<dbReference type="PIRSF" id="PIRSF000497">
    <property type="entry name" value="MAT"/>
    <property type="match status" value="1"/>
</dbReference>
<dbReference type="SUPFAM" id="SSF55973">
    <property type="entry name" value="S-adenosylmethionine synthetase"/>
    <property type="match status" value="3"/>
</dbReference>
<dbReference type="PROSITE" id="PS00376">
    <property type="entry name" value="ADOMET_SYNTHASE_1"/>
    <property type="match status" value="1"/>
</dbReference>
<dbReference type="PROSITE" id="PS00377">
    <property type="entry name" value="ADOMET_SYNTHASE_2"/>
    <property type="match status" value="1"/>
</dbReference>
<comment type="function">
    <text evidence="1">Catalyzes the formation of S-adenosylmethionine (AdoMet) from methionine and ATP. The overall synthetic reaction is composed of two sequential steps, AdoMet formation and the subsequent tripolyphosphate hydrolysis which occurs prior to release of AdoMet from the enzyme.</text>
</comment>
<comment type="catalytic activity">
    <reaction evidence="1">
        <text>L-methionine + ATP + H2O = S-adenosyl-L-methionine + phosphate + diphosphate</text>
        <dbReference type="Rhea" id="RHEA:21080"/>
        <dbReference type="ChEBI" id="CHEBI:15377"/>
        <dbReference type="ChEBI" id="CHEBI:30616"/>
        <dbReference type="ChEBI" id="CHEBI:33019"/>
        <dbReference type="ChEBI" id="CHEBI:43474"/>
        <dbReference type="ChEBI" id="CHEBI:57844"/>
        <dbReference type="ChEBI" id="CHEBI:59789"/>
        <dbReference type="EC" id="2.5.1.6"/>
    </reaction>
</comment>
<comment type="cofactor">
    <cofactor evidence="1">
        <name>Mg(2+)</name>
        <dbReference type="ChEBI" id="CHEBI:18420"/>
    </cofactor>
    <text evidence="1">Binds 2 divalent ions per subunit.</text>
</comment>
<comment type="cofactor">
    <cofactor evidence="1">
        <name>K(+)</name>
        <dbReference type="ChEBI" id="CHEBI:29103"/>
    </cofactor>
    <text evidence="1">Binds 1 potassium ion per subunit.</text>
</comment>
<comment type="pathway">
    <text evidence="1">Amino-acid biosynthesis; S-adenosyl-L-methionine biosynthesis; S-adenosyl-L-methionine from L-methionine: step 1/1.</text>
</comment>
<comment type="subunit">
    <text evidence="1">Homotetramer; dimer of dimers.</text>
</comment>
<comment type="subcellular location">
    <subcellularLocation>
        <location evidence="1">Cytoplasm</location>
    </subcellularLocation>
</comment>
<comment type="similarity">
    <text evidence="1">Belongs to the AdoMet synthase family.</text>
</comment>
<accession>Q6GFR6</accession>
<proteinExistence type="inferred from homology"/>
<sequence length="397" mass="43627">MLNNKRLFTSESVTEGHPDKIADQVSDAILDAILKDDPNARVACETTVTTGMALIAGEISTTTYVDIPKVVRETIKEIGYTRAKYGYDYETMAILTAIDEQSPDIAQGVDKALEYRDKDSEEEIEATGAGDQGLMFGYATNETETYMPLAIYLSHQLAKRLSDVRKDGTLNYLRPDGKVQVTVEYDENDNPVRIDTIVVSTQHADDVTLEQIQEDIKAHVIYPTVPENLINEQTKFYINPTGRFVIGGPQGDAGLTGRKIIVDTYGGYARHGGGCFSGKDPTKVDRSAAYAARYVAKNIVAAGLADQCEVQLAYAIGVAEPVSIAIDTFGTGKVSEGQLVEAVRKHFDLRPAGIIKMLDLKQPIYKQTAAYGHFGRTDVLFPWEKLDKVEELKDAVK</sequence>
<evidence type="ECO:0000255" key="1">
    <source>
        <dbReference type="HAMAP-Rule" id="MF_00086"/>
    </source>
</evidence>
<gene>
    <name evidence="1" type="primary">metK</name>
    <name type="ordered locus">SAR1870</name>
</gene>
<organism>
    <name type="scientific">Staphylococcus aureus (strain MRSA252)</name>
    <dbReference type="NCBI Taxonomy" id="282458"/>
    <lineage>
        <taxon>Bacteria</taxon>
        <taxon>Bacillati</taxon>
        <taxon>Bacillota</taxon>
        <taxon>Bacilli</taxon>
        <taxon>Bacillales</taxon>
        <taxon>Staphylococcaceae</taxon>
        <taxon>Staphylococcus</taxon>
    </lineage>
</organism>
<name>METK_STAAR</name>